<accession>P07539</accession>
<name>HOLIN_BPPZA</name>
<keyword id="KW-0024">Alternative initiation</keyword>
<keyword id="KW-0204">Cytolysis</keyword>
<keyword id="KW-1030">Host cell inner membrane</keyword>
<keyword id="KW-0578">Host cell lysis by virus</keyword>
<keyword id="KW-1032">Host cell membrane</keyword>
<keyword id="KW-1043">Host membrane</keyword>
<keyword id="KW-0426">Late protein</keyword>
<keyword id="KW-0472">Membrane</keyword>
<keyword id="KW-0812">Transmembrane</keyword>
<keyword id="KW-1133">Transmembrane helix</keyword>
<keyword id="KW-1188">Viral release from host cell</keyword>
<comment type="function">
    <molecule>Isoform Holin</molecule>
    <text evidence="1">Accumulates harmlessly in the cytoplasmic membrane until it reaches a critical concentration that triggers the formation of micron-scale pores (holes) causing host cell membrane disruption and endolysin escape into the periplasmic space (By similarity). Determines the precise timing of host cell lysis (By similarity). Participates with the endolysin and spanin proteins in the sequential events which lead to the programmed host cell lysis releasing the mature viral particles from the host cell (By similarity).</text>
</comment>
<comment type="function">
    <molecule>Isoform Antiholin</molecule>
    <text evidence="1">Counteracts the aggregation of the holin molecules and thus of pore formation.</text>
</comment>
<comment type="subunit">
    <molecule>Isoform Holin</molecule>
    <text evidence="1">Homomultimer. Interacts with isoform Antiholin; this interaction blocks the holin homomultimerization and delays host cell lysis.</text>
</comment>
<comment type="subcellular location">
    <subcellularLocation>
        <location evidence="1">Host cell inner membrane</location>
        <topology evidence="1">Multi-pass membrane protein</topology>
    </subcellularLocation>
    <text evidence="4">Classified as a class I holin.</text>
</comment>
<comment type="alternative products">
    <event type="alternative initiation"/>
    <isoform>
        <id>P07539-1</id>
        <name evidence="2">Antiholin</name>
        <sequence type="displayed"/>
    </isoform>
    <isoform>
        <id>P07539-2</id>
        <name evidence="2">Holin</name>
        <sequence type="described" ref="VSP_058250"/>
    </isoform>
</comment>
<comment type="domain">
    <text evidence="1">Isoform Holin has 3 transmembrane regions whereas isoform Antiholin lacks the first transmembrane region.</text>
</comment>
<comment type="domain">
    <text evidence="1">The C-terminus acts as a cytoplasmic regulatory region.</text>
</comment>
<comment type="similarity">
    <text evidence="4">Belongs to the bacteriophage holin family. phi29likevirus holin subfamily.</text>
</comment>
<dbReference type="EMBL" id="M11813">
    <property type="protein sequence ID" value="AAA88491.1"/>
    <property type="molecule type" value="Genomic_DNA"/>
</dbReference>
<dbReference type="PIR" id="I24831">
    <property type="entry name" value="WMBP14"/>
</dbReference>
<dbReference type="SMR" id="P07539"/>
<dbReference type="Proteomes" id="UP000000855">
    <property type="component" value="Segment"/>
</dbReference>
<dbReference type="GO" id="GO:0020002">
    <property type="term" value="C:host cell plasma membrane"/>
    <property type="evidence" value="ECO:0007669"/>
    <property type="project" value="UniProtKB-SubCell"/>
</dbReference>
<dbReference type="GO" id="GO:0016020">
    <property type="term" value="C:membrane"/>
    <property type="evidence" value="ECO:0007669"/>
    <property type="project" value="UniProtKB-KW"/>
</dbReference>
<dbReference type="GO" id="GO:0031640">
    <property type="term" value="P:killing of cells of another organism"/>
    <property type="evidence" value="ECO:0007669"/>
    <property type="project" value="UniProtKB-KW"/>
</dbReference>
<dbReference type="InterPro" id="IPR006480">
    <property type="entry name" value="Phage_holin_4_1"/>
</dbReference>
<dbReference type="NCBIfam" id="TIGR01593">
    <property type="entry name" value="holin_tox_secr"/>
    <property type="match status" value="1"/>
</dbReference>
<dbReference type="Pfam" id="PF05105">
    <property type="entry name" value="Phage_holin_4_1"/>
    <property type="match status" value="1"/>
</dbReference>
<gene>
    <name type="primary">14</name>
</gene>
<reference key="1">
    <citation type="journal article" date="1986" name="Gene">
        <title>Nucleotide sequence of the late region of Bacillus subtilis phage PZA, a close relative of phi 29.</title>
        <authorList>
            <person name="Paces V."/>
            <person name="Vlcek C."/>
            <person name="Urbanek P."/>
        </authorList>
    </citation>
    <scope>NUCLEOTIDE SEQUENCE [GENOMIC DNA]</scope>
</reference>
<protein>
    <recommendedName>
        <fullName evidence="2">Antiholin</fullName>
    </recommendedName>
    <alternativeName>
        <fullName>Gene product 14</fullName>
        <shortName>gp14</shortName>
    </alternativeName>
    <alternativeName>
        <fullName evidence="2">Lysis inhibitor 14-131</fullName>
    </alternativeName>
    <alternativeName>
        <fullName>Protein p14</fullName>
    </alternativeName>
    <domain>
        <recommendedName>
            <fullName evidence="2">Holin</fullName>
        </recommendedName>
        <alternativeName>
            <fullName evidence="2">Lysis protein 14-129</fullName>
        </alternativeName>
    </domain>
</protein>
<evidence type="ECO:0000250" key="1">
    <source>
        <dbReference type="UniProtKB" id="P03705"/>
    </source>
</evidence>
<evidence type="ECO:0000250" key="2">
    <source>
        <dbReference type="UniProtKB" id="P11188"/>
    </source>
</evidence>
<evidence type="ECO:0000255" key="3"/>
<evidence type="ECO:0000305" key="4"/>
<feature type="chain" id="PRO_0000106599" description="Antiholin">
    <location>
        <begin position="1"/>
        <end position="131"/>
    </location>
</feature>
<feature type="topological domain" description="Cytoplasmic" evidence="1">
    <location>
        <begin position="1"/>
        <end position="52"/>
    </location>
</feature>
<feature type="transmembrane region" description="Helical" evidence="3">
    <location>
        <begin position="53"/>
        <end position="75"/>
    </location>
</feature>
<feature type="topological domain" description="Periplasmic" evidence="1">
    <location>
        <begin position="76"/>
        <end position="78"/>
    </location>
</feature>
<feature type="transmembrane region" description="Helical" evidence="3">
    <location>
        <begin position="79"/>
        <end position="101"/>
    </location>
</feature>
<feature type="topological domain" description="Cytoplasmic" evidence="1">
    <location>
        <begin position="102"/>
        <end position="131"/>
    </location>
</feature>
<feature type="splice variant" id="VSP_058250" description="In isoform Holin." evidence="2">
    <location>
        <begin position="1"/>
        <end position="2"/>
    </location>
</feature>
<feature type="topological domain" description="Periplasmic" evidence="1">
    <location sequence="P07539-2">
        <begin position="1"/>
        <end position="15"/>
    </location>
</feature>
<feature type="transmembrane region" description="Helical" evidence="3">
    <location sequence="P07539-2">
        <begin position="16"/>
        <end position="38"/>
    </location>
</feature>
<feature type="topological domain" description="Cytoplasmic" evidence="1">
    <location sequence="P07539-2">
        <begin position="39"/>
        <end position="50"/>
    </location>
</feature>
<sequence>MTMIAWMQHFLETDETKLIYWLTFLMVCMVVDTVLGVLFAKLNPNIKFSSFKIKTGVLIKVSEMILALLAVPFAVPFPAGLPLLYTVYTALCVSEIYSIFGHLRLVDDKSDFLEILENFFKRTSGKNKEDK</sequence>
<organismHost>
    <name type="scientific">Bacillus subtilis</name>
    <dbReference type="NCBI Taxonomy" id="1423"/>
</organismHost>
<proteinExistence type="inferred from homology"/>
<organism>
    <name type="scientific">Bacillus phage PZA</name>
    <name type="common">Bacteriophage PZA</name>
    <dbReference type="NCBI Taxonomy" id="10757"/>
    <lineage>
        <taxon>Viruses</taxon>
        <taxon>Duplodnaviria</taxon>
        <taxon>Heunggongvirae</taxon>
        <taxon>Uroviricota</taxon>
        <taxon>Caudoviricetes</taxon>
        <taxon>Salasmaviridae</taxon>
        <taxon>Picovirinae</taxon>
        <taxon>Salasvirus</taxon>
        <taxon>Salasvirus PZA</taxon>
    </lineage>
</organism>